<proteinExistence type="inferred from homology"/>
<reference key="1">
    <citation type="journal article" date="2005" name="Proc. Natl. Acad. Sci. U.S.A.">
        <title>Whole genome sequence of Staphylococcus saprophyticus reveals the pathogenesis of uncomplicated urinary tract infection.</title>
        <authorList>
            <person name="Kuroda M."/>
            <person name="Yamashita A."/>
            <person name="Hirakawa H."/>
            <person name="Kumano M."/>
            <person name="Morikawa K."/>
            <person name="Higashide M."/>
            <person name="Maruyama A."/>
            <person name="Inose Y."/>
            <person name="Matoba K."/>
            <person name="Toh H."/>
            <person name="Kuhara S."/>
            <person name="Hattori M."/>
            <person name="Ohta T."/>
        </authorList>
    </citation>
    <scope>NUCLEOTIDE SEQUENCE [LARGE SCALE GENOMIC DNA]</scope>
    <source>
        <strain>ATCC 15305 / DSM 20229 / NCIMB 8711 / NCTC 7292 / S-41</strain>
    </source>
</reference>
<name>KPRS_STAS1</name>
<gene>
    <name evidence="1" type="primary">prs</name>
    <name type="ordered locus">SSP2256</name>
</gene>
<comment type="function">
    <text evidence="1">Involved in the biosynthesis of the central metabolite phospho-alpha-D-ribosyl-1-pyrophosphate (PRPP) via the transfer of pyrophosphoryl group from ATP to 1-hydroxyl of ribose-5-phosphate (Rib-5-P).</text>
</comment>
<comment type="catalytic activity">
    <reaction evidence="1">
        <text>D-ribose 5-phosphate + ATP = 5-phospho-alpha-D-ribose 1-diphosphate + AMP + H(+)</text>
        <dbReference type="Rhea" id="RHEA:15609"/>
        <dbReference type="ChEBI" id="CHEBI:15378"/>
        <dbReference type="ChEBI" id="CHEBI:30616"/>
        <dbReference type="ChEBI" id="CHEBI:58017"/>
        <dbReference type="ChEBI" id="CHEBI:78346"/>
        <dbReference type="ChEBI" id="CHEBI:456215"/>
        <dbReference type="EC" id="2.7.6.1"/>
    </reaction>
</comment>
<comment type="cofactor">
    <cofactor evidence="1">
        <name>Mg(2+)</name>
        <dbReference type="ChEBI" id="CHEBI:18420"/>
    </cofactor>
    <text evidence="1">Binds 2 Mg(2+) ions per subunit.</text>
</comment>
<comment type="pathway">
    <text evidence="1">Metabolic intermediate biosynthesis; 5-phospho-alpha-D-ribose 1-diphosphate biosynthesis; 5-phospho-alpha-D-ribose 1-diphosphate from D-ribose 5-phosphate (route I): step 1/1.</text>
</comment>
<comment type="subunit">
    <text evidence="1">Homohexamer.</text>
</comment>
<comment type="subcellular location">
    <subcellularLocation>
        <location evidence="1">Cytoplasm</location>
    </subcellularLocation>
</comment>
<comment type="similarity">
    <text evidence="1">Belongs to the ribose-phosphate pyrophosphokinase family. Class I subfamily.</text>
</comment>
<protein>
    <recommendedName>
        <fullName evidence="1">Ribose-phosphate pyrophosphokinase</fullName>
        <shortName evidence="1">RPPK</shortName>
        <ecNumber evidence="1">2.7.6.1</ecNumber>
    </recommendedName>
    <alternativeName>
        <fullName evidence="1">5-phospho-D-ribosyl alpha-1-diphosphate synthase</fullName>
    </alternativeName>
    <alternativeName>
        <fullName evidence="1">Phosphoribosyl diphosphate synthase</fullName>
    </alternativeName>
    <alternativeName>
        <fullName evidence="1">Phosphoribosyl pyrophosphate synthase</fullName>
        <shortName evidence="1">P-Rib-PP synthase</shortName>
        <shortName evidence="1">PRPP synthase</shortName>
        <shortName evidence="1">PRPPase</shortName>
    </alternativeName>
</protein>
<sequence>MLNNEYKNSALKIFSLKGNEPLAQEVADHVGIELGKCSVKRFSDGEIQINIEESIRGCDVFIIQPTSNPVNLHLMELLIMIDACRRASAANINIVVPYYGYARQDRKARSREPITAKLVANLIETAGADRMIALDLHAPQIQGFFDMPIDHLMGVPILAQYFKNETDIDPEECVVVSPDHGGVTRARKLADILKTPIAIIDKRRPKPNVAEVMNIVGEIEGRTAIIIDDIIDTAGTITLAAQALKDKGAKDVYACCTHPVLSGPAKERIENSAIKELVVTNSIQLDEKRKPENTKELSVAGLLAQAIIRVYERESVSVLFD</sequence>
<evidence type="ECO:0000255" key="1">
    <source>
        <dbReference type="HAMAP-Rule" id="MF_00583"/>
    </source>
</evidence>
<dbReference type="EC" id="2.7.6.1" evidence="1"/>
<dbReference type="EMBL" id="AP008934">
    <property type="protein sequence ID" value="BAE19401.1"/>
    <property type="molecule type" value="Genomic_DNA"/>
</dbReference>
<dbReference type="RefSeq" id="WP_011303871.1">
    <property type="nucleotide sequence ID" value="NZ_MTGA01000029.1"/>
</dbReference>
<dbReference type="SMR" id="Q49V09"/>
<dbReference type="KEGG" id="ssp:SSP2256"/>
<dbReference type="eggNOG" id="COG0462">
    <property type="taxonomic scope" value="Bacteria"/>
</dbReference>
<dbReference type="HOGENOM" id="CLU_033546_1_0_9"/>
<dbReference type="OrthoDB" id="9777067at2"/>
<dbReference type="UniPathway" id="UPA00087">
    <property type="reaction ID" value="UER00172"/>
</dbReference>
<dbReference type="Proteomes" id="UP000006371">
    <property type="component" value="Chromosome"/>
</dbReference>
<dbReference type="GO" id="GO:0005737">
    <property type="term" value="C:cytoplasm"/>
    <property type="evidence" value="ECO:0007669"/>
    <property type="project" value="UniProtKB-SubCell"/>
</dbReference>
<dbReference type="GO" id="GO:0002189">
    <property type="term" value="C:ribose phosphate diphosphokinase complex"/>
    <property type="evidence" value="ECO:0007669"/>
    <property type="project" value="TreeGrafter"/>
</dbReference>
<dbReference type="GO" id="GO:0005524">
    <property type="term" value="F:ATP binding"/>
    <property type="evidence" value="ECO:0007669"/>
    <property type="project" value="UniProtKB-KW"/>
</dbReference>
<dbReference type="GO" id="GO:0016301">
    <property type="term" value="F:kinase activity"/>
    <property type="evidence" value="ECO:0007669"/>
    <property type="project" value="UniProtKB-KW"/>
</dbReference>
<dbReference type="GO" id="GO:0000287">
    <property type="term" value="F:magnesium ion binding"/>
    <property type="evidence" value="ECO:0007669"/>
    <property type="project" value="UniProtKB-UniRule"/>
</dbReference>
<dbReference type="GO" id="GO:0004749">
    <property type="term" value="F:ribose phosphate diphosphokinase activity"/>
    <property type="evidence" value="ECO:0007669"/>
    <property type="project" value="UniProtKB-UniRule"/>
</dbReference>
<dbReference type="GO" id="GO:0006015">
    <property type="term" value="P:5-phosphoribose 1-diphosphate biosynthetic process"/>
    <property type="evidence" value="ECO:0007669"/>
    <property type="project" value="UniProtKB-UniRule"/>
</dbReference>
<dbReference type="GO" id="GO:0006164">
    <property type="term" value="P:purine nucleotide biosynthetic process"/>
    <property type="evidence" value="ECO:0007669"/>
    <property type="project" value="TreeGrafter"/>
</dbReference>
<dbReference type="GO" id="GO:0009156">
    <property type="term" value="P:ribonucleoside monophosphate biosynthetic process"/>
    <property type="evidence" value="ECO:0007669"/>
    <property type="project" value="InterPro"/>
</dbReference>
<dbReference type="CDD" id="cd06223">
    <property type="entry name" value="PRTases_typeI"/>
    <property type="match status" value="1"/>
</dbReference>
<dbReference type="FunFam" id="3.40.50.2020:FF:000002">
    <property type="entry name" value="Ribose-phosphate pyrophosphokinase"/>
    <property type="match status" value="1"/>
</dbReference>
<dbReference type="FunFam" id="3.40.50.2020:FF:000014">
    <property type="entry name" value="Ribose-phosphate pyrophosphokinase 1"/>
    <property type="match status" value="1"/>
</dbReference>
<dbReference type="Gene3D" id="3.40.50.2020">
    <property type="match status" value="2"/>
</dbReference>
<dbReference type="HAMAP" id="MF_00583_B">
    <property type="entry name" value="RibP_PPkinase_B"/>
    <property type="match status" value="1"/>
</dbReference>
<dbReference type="InterPro" id="IPR000842">
    <property type="entry name" value="PRib_PP_synth_CS"/>
</dbReference>
<dbReference type="InterPro" id="IPR029099">
    <property type="entry name" value="Pribosyltran_N"/>
</dbReference>
<dbReference type="InterPro" id="IPR000836">
    <property type="entry name" value="PRibTrfase_dom"/>
</dbReference>
<dbReference type="InterPro" id="IPR029057">
    <property type="entry name" value="PRTase-like"/>
</dbReference>
<dbReference type="InterPro" id="IPR005946">
    <property type="entry name" value="Rib-P_diPkinase"/>
</dbReference>
<dbReference type="InterPro" id="IPR037515">
    <property type="entry name" value="Rib-P_diPkinase_bac"/>
</dbReference>
<dbReference type="NCBIfam" id="NF002320">
    <property type="entry name" value="PRK01259.1"/>
    <property type="match status" value="1"/>
</dbReference>
<dbReference type="NCBIfam" id="NF002618">
    <property type="entry name" value="PRK02269.1"/>
    <property type="match status" value="1"/>
</dbReference>
<dbReference type="NCBIfam" id="TIGR01251">
    <property type="entry name" value="ribP_PPkin"/>
    <property type="match status" value="1"/>
</dbReference>
<dbReference type="PANTHER" id="PTHR10210">
    <property type="entry name" value="RIBOSE-PHOSPHATE DIPHOSPHOKINASE FAMILY MEMBER"/>
    <property type="match status" value="1"/>
</dbReference>
<dbReference type="PANTHER" id="PTHR10210:SF41">
    <property type="entry name" value="RIBOSE-PHOSPHATE PYROPHOSPHOKINASE 1, CHLOROPLASTIC"/>
    <property type="match status" value="1"/>
</dbReference>
<dbReference type="Pfam" id="PF14572">
    <property type="entry name" value="Pribosyl_synth"/>
    <property type="match status" value="1"/>
</dbReference>
<dbReference type="Pfam" id="PF13793">
    <property type="entry name" value="Pribosyltran_N"/>
    <property type="match status" value="1"/>
</dbReference>
<dbReference type="SMART" id="SM01400">
    <property type="entry name" value="Pribosyltran_N"/>
    <property type="match status" value="1"/>
</dbReference>
<dbReference type="SUPFAM" id="SSF53271">
    <property type="entry name" value="PRTase-like"/>
    <property type="match status" value="1"/>
</dbReference>
<dbReference type="PROSITE" id="PS00114">
    <property type="entry name" value="PRPP_SYNTHASE"/>
    <property type="match status" value="1"/>
</dbReference>
<keyword id="KW-0067">ATP-binding</keyword>
<keyword id="KW-0963">Cytoplasm</keyword>
<keyword id="KW-0418">Kinase</keyword>
<keyword id="KW-0460">Magnesium</keyword>
<keyword id="KW-0479">Metal-binding</keyword>
<keyword id="KW-0545">Nucleotide biosynthesis</keyword>
<keyword id="KW-0547">Nucleotide-binding</keyword>
<keyword id="KW-1185">Reference proteome</keyword>
<keyword id="KW-0808">Transferase</keyword>
<accession>Q49V09</accession>
<organism>
    <name type="scientific">Staphylococcus saprophyticus subsp. saprophyticus (strain ATCC 15305 / DSM 20229 / NCIMB 8711 / NCTC 7292 / S-41)</name>
    <dbReference type="NCBI Taxonomy" id="342451"/>
    <lineage>
        <taxon>Bacteria</taxon>
        <taxon>Bacillati</taxon>
        <taxon>Bacillota</taxon>
        <taxon>Bacilli</taxon>
        <taxon>Bacillales</taxon>
        <taxon>Staphylococcaceae</taxon>
        <taxon>Staphylococcus</taxon>
    </lineage>
</organism>
<feature type="chain" id="PRO_0000141195" description="Ribose-phosphate pyrophosphokinase">
    <location>
        <begin position="1"/>
        <end position="321"/>
    </location>
</feature>
<feature type="active site" evidence="1">
    <location>
        <position position="202"/>
    </location>
</feature>
<feature type="binding site" evidence="1">
    <location>
        <begin position="44"/>
        <end position="46"/>
    </location>
    <ligand>
        <name>ATP</name>
        <dbReference type="ChEBI" id="CHEBI:30616"/>
    </ligand>
</feature>
<feature type="binding site" evidence="1">
    <location>
        <begin position="103"/>
        <end position="104"/>
    </location>
    <ligand>
        <name>ATP</name>
        <dbReference type="ChEBI" id="CHEBI:30616"/>
    </ligand>
</feature>
<feature type="binding site" evidence="1">
    <location>
        <position position="137"/>
    </location>
    <ligand>
        <name>Mg(2+)</name>
        <dbReference type="ChEBI" id="CHEBI:18420"/>
        <label>1</label>
    </ligand>
</feature>
<feature type="binding site" evidence="1">
    <location>
        <position position="179"/>
    </location>
    <ligand>
        <name>Mg(2+)</name>
        <dbReference type="ChEBI" id="CHEBI:18420"/>
        <label>2</label>
    </ligand>
</feature>
<feature type="binding site" evidence="1">
    <location>
        <position position="204"/>
    </location>
    <ligand>
        <name>D-ribose 5-phosphate</name>
        <dbReference type="ChEBI" id="CHEBI:78346"/>
    </ligand>
</feature>
<feature type="binding site" evidence="1">
    <location>
        <position position="228"/>
    </location>
    <ligand>
        <name>D-ribose 5-phosphate</name>
        <dbReference type="ChEBI" id="CHEBI:78346"/>
    </ligand>
</feature>
<feature type="binding site" evidence="1">
    <location>
        <begin position="232"/>
        <end position="236"/>
    </location>
    <ligand>
        <name>D-ribose 5-phosphate</name>
        <dbReference type="ChEBI" id="CHEBI:78346"/>
    </ligand>
</feature>